<reference key="1">
    <citation type="submission" date="2008-01" db="EMBL/GenBank/DDBJ databases">
        <title>Complete sequence of Shewanella halifaxensis HAW-EB4.</title>
        <authorList>
            <consortium name="US DOE Joint Genome Institute"/>
            <person name="Copeland A."/>
            <person name="Lucas S."/>
            <person name="Lapidus A."/>
            <person name="Glavina del Rio T."/>
            <person name="Dalin E."/>
            <person name="Tice H."/>
            <person name="Bruce D."/>
            <person name="Goodwin L."/>
            <person name="Pitluck S."/>
            <person name="Sims D."/>
            <person name="Brettin T."/>
            <person name="Detter J.C."/>
            <person name="Han C."/>
            <person name="Kuske C.R."/>
            <person name="Schmutz J."/>
            <person name="Larimer F."/>
            <person name="Land M."/>
            <person name="Hauser L."/>
            <person name="Kyrpides N."/>
            <person name="Kim E."/>
            <person name="Zhao J.-S."/>
            <person name="Richardson P."/>
        </authorList>
    </citation>
    <scope>NUCLEOTIDE SEQUENCE [LARGE SCALE GENOMIC DNA]</scope>
    <source>
        <strain>HAW-EB4</strain>
    </source>
</reference>
<comment type="function">
    <text evidence="1">Forms part of the ribosomal stalk which helps the ribosome interact with GTP-bound translation factors.</text>
</comment>
<comment type="subunit">
    <text evidence="1">Part of the ribosomal stalk of the 50S ribosomal subunit. Interacts with L10 and the large rRNA to form the base of the stalk. L10 forms an elongated spine to which L12 dimers bind in a sequential fashion forming a multimeric L10(L12)X complex.</text>
</comment>
<comment type="PTM">
    <text evidence="1">One or more lysine residues are methylated.</text>
</comment>
<comment type="similarity">
    <text evidence="1">Belongs to the universal ribosomal protein uL11 family.</text>
</comment>
<name>RL11_SHEHH</name>
<proteinExistence type="inferred from homology"/>
<gene>
    <name evidence="1" type="primary">rplK</name>
    <name type="ordered locus">Shal_4145</name>
</gene>
<evidence type="ECO:0000255" key="1">
    <source>
        <dbReference type="HAMAP-Rule" id="MF_00736"/>
    </source>
</evidence>
<evidence type="ECO:0000305" key="2"/>
<sequence>MAKKVDGYIKLQVAAGAANPSPPVGPALGQKGVNIMEFCKAFNARTDKFEKGMPIPVVITVYSDRSFTFETKTPPASFLLLKAAGLKSGSGRPNTEKVGTIKRSAVQEIAETKAADMTGADIEAMTRSIEGTARSMGLVVED</sequence>
<accession>B0TM23</accession>
<feature type="chain" id="PRO_1000083404" description="Large ribosomal subunit protein uL11">
    <location>
        <begin position="1"/>
        <end position="142"/>
    </location>
</feature>
<protein>
    <recommendedName>
        <fullName evidence="1">Large ribosomal subunit protein uL11</fullName>
    </recommendedName>
    <alternativeName>
        <fullName evidence="2">50S ribosomal protein L11</fullName>
    </alternativeName>
</protein>
<keyword id="KW-0488">Methylation</keyword>
<keyword id="KW-0687">Ribonucleoprotein</keyword>
<keyword id="KW-0689">Ribosomal protein</keyword>
<keyword id="KW-0694">RNA-binding</keyword>
<keyword id="KW-0699">rRNA-binding</keyword>
<organism>
    <name type="scientific">Shewanella halifaxensis (strain HAW-EB4)</name>
    <dbReference type="NCBI Taxonomy" id="458817"/>
    <lineage>
        <taxon>Bacteria</taxon>
        <taxon>Pseudomonadati</taxon>
        <taxon>Pseudomonadota</taxon>
        <taxon>Gammaproteobacteria</taxon>
        <taxon>Alteromonadales</taxon>
        <taxon>Shewanellaceae</taxon>
        <taxon>Shewanella</taxon>
    </lineage>
</organism>
<dbReference type="EMBL" id="CP000931">
    <property type="protein sequence ID" value="ABZ78685.1"/>
    <property type="molecule type" value="Genomic_DNA"/>
</dbReference>
<dbReference type="RefSeq" id="WP_012279190.1">
    <property type="nucleotide sequence ID" value="NC_010334.1"/>
</dbReference>
<dbReference type="SMR" id="B0TM23"/>
<dbReference type="STRING" id="458817.Shal_4145"/>
<dbReference type="KEGG" id="shl:Shal_4145"/>
<dbReference type="eggNOG" id="COG0080">
    <property type="taxonomic scope" value="Bacteria"/>
</dbReference>
<dbReference type="HOGENOM" id="CLU_074237_2_0_6"/>
<dbReference type="OrthoDB" id="9802408at2"/>
<dbReference type="Proteomes" id="UP000001317">
    <property type="component" value="Chromosome"/>
</dbReference>
<dbReference type="GO" id="GO:0022625">
    <property type="term" value="C:cytosolic large ribosomal subunit"/>
    <property type="evidence" value="ECO:0007669"/>
    <property type="project" value="TreeGrafter"/>
</dbReference>
<dbReference type="GO" id="GO:0070180">
    <property type="term" value="F:large ribosomal subunit rRNA binding"/>
    <property type="evidence" value="ECO:0007669"/>
    <property type="project" value="UniProtKB-UniRule"/>
</dbReference>
<dbReference type="GO" id="GO:0003735">
    <property type="term" value="F:structural constituent of ribosome"/>
    <property type="evidence" value="ECO:0007669"/>
    <property type="project" value="InterPro"/>
</dbReference>
<dbReference type="GO" id="GO:0006412">
    <property type="term" value="P:translation"/>
    <property type="evidence" value="ECO:0007669"/>
    <property type="project" value="UniProtKB-UniRule"/>
</dbReference>
<dbReference type="CDD" id="cd00349">
    <property type="entry name" value="Ribosomal_L11"/>
    <property type="match status" value="1"/>
</dbReference>
<dbReference type="FunFam" id="1.10.10.250:FF:000001">
    <property type="entry name" value="50S ribosomal protein L11"/>
    <property type="match status" value="1"/>
</dbReference>
<dbReference type="FunFam" id="3.30.1550.10:FF:000001">
    <property type="entry name" value="50S ribosomal protein L11"/>
    <property type="match status" value="1"/>
</dbReference>
<dbReference type="Gene3D" id="1.10.10.250">
    <property type="entry name" value="Ribosomal protein L11, C-terminal domain"/>
    <property type="match status" value="1"/>
</dbReference>
<dbReference type="Gene3D" id="3.30.1550.10">
    <property type="entry name" value="Ribosomal protein L11/L12, N-terminal domain"/>
    <property type="match status" value="1"/>
</dbReference>
<dbReference type="HAMAP" id="MF_00736">
    <property type="entry name" value="Ribosomal_uL11"/>
    <property type="match status" value="1"/>
</dbReference>
<dbReference type="InterPro" id="IPR000911">
    <property type="entry name" value="Ribosomal_uL11"/>
</dbReference>
<dbReference type="InterPro" id="IPR006519">
    <property type="entry name" value="Ribosomal_uL11_bac-typ"/>
</dbReference>
<dbReference type="InterPro" id="IPR020783">
    <property type="entry name" value="Ribosomal_uL11_C"/>
</dbReference>
<dbReference type="InterPro" id="IPR036769">
    <property type="entry name" value="Ribosomal_uL11_C_sf"/>
</dbReference>
<dbReference type="InterPro" id="IPR020785">
    <property type="entry name" value="Ribosomal_uL11_CS"/>
</dbReference>
<dbReference type="InterPro" id="IPR020784">
    <property type="entry name" value="Ribosomal_uL11_N"/>
</dbReference>
<dbReference type="InterPro" id="IPR036796">
    <property type="entry name" value="Ribosomal_uL11_N_sf"/>
</dbReference>
<dbReference type="NCBIfam" id="TIGR01632">
    <property type="entry name" value="L11_bact"/>
    <property type="match status" value="1"/>
</dbReference>
<dbReference type="PANTHER" id="PTHR11661">
    <property type="entry name" value="60S RIBOSOMAL PROTEIN L12"/>
    <property type="match status" value="1"/>
</dbReference>
<dbReference type="PANTHER" id="PTHR11661:SF1">
    <property type="entry name" value="LARGE RIBOSOMAL SUBUNIT PROTEIN UL11M"/>
    <property type="match status" value="1"/>
</dbReference>
<dbReference type="Pfam" id="PF00298">
    <property type="entry name" value="Ribosomal_L11"/>
    <property type="match status" value="1"/>
</dbReference>
<dbReference type="Pfam" id="PF03946">
    <property type="entry name" value="Ribosomal_L11_N"/>
    <property type="match status" value="1"/>
</dbReference>
<dbReference type="SMART" id="SM00649">
    <property type="entry name" value="RL11"/>
    <property type="match status" value="1"/>
</dbReference>
<dbReference type="SUPFAM" id="SSF54747">
    <property type="entry name" value="Ribosomal L11/L12e N-terminal domain"/>
    <property type="match status" value="1"/>
</dbReference>
<dbReference type="SUPFAM" id="SSF46906">
    <property type="entry name" value="Ribosomal protein L11, C-terminal domain"/>
    <property type="match status" value="1"/>
</dbReference>
<dbReference type="PROSITE" id="PS00359">
    <property type="entry name" value="RIBOSOMAL_L11"/>
    <property type="match status" value="1"/>
</dbReference>